<comment type="function">
    <text evidence="1">Catalyzes a salvage reaction resulting in the formation of AMP, that is energically less costly than de novo synthesis.</text>
</comment>
<comment type="catalytic activity">
    <reaction evidence="1">
        <text>AMP + diphosphate = 5-phospho-alpha-D-ribose 1-diphosphate + adenine</text>
        <dbReference type="Rhea" id="RHEA:16609"/>
        <dbReference type="ChEBI" id="CHEBI:16708"/>
        <dbReference type="ChEBI" id="CHEBI:33019"/>
        <dbReference type="ChEBI" id="CHEBI:58017"/>
        <dbReference type="ChEBI" id="CHEBI:456215"/>
        <dbReference type="EC" id="2.4.2.7"/>
    </reaction>
</comment>
<comment type="pathway">
    <text evidence="1">Purine metabolism; AMP biosynthesis via salvage pathway; AMP from adenine: step 1/1.</text>
</comment>
<comment type="subunit">
    <text evidence="1">Homodimer.</text>
</comment>
<comment type="subcellular location">
    <subcellularLocation>
        <location evidence="1">Cytoplasm</location>
    </subcellularLocation>
</comment>
<comment type="similarity">
    <text evidence="1">Belongs to the purine/pyrimidine phosphoribosyltransferase family.</text>
</comment>
<comment type="sequence caution" evidence="2">
    <conflict type="erroneous initiation">
        <sequence resource="EMBL-CDS" id="ABY38630"/>
    </conflict>
</comment>
<proteinExistence type="inferred from homology"/>
<feature type="chain" id="PRO_0000329337" description="Adenine phosphoribosyltransferase">
    <location>
        <begin position="1"/>
        <end position="181"/>
    </location>
</feature>
<gene>
    <name evidence="1" type="primary">apt</name>
    <name type="ordered locus">BSUIS_A1599</name>
</gene>
<organism>
    <name type="scientific">Brucella suis (strain ATCC 23445 / NCTC 10510)</name>
    <dbReference type="NCBI Taxonomy" id="470137"/>
    <lineage>
        <taxon>Bacteria</taxon>
        <taxon>Pseudomonadati</taxon>
        <taxon>Pseudomonadota</taxon>
        <taxon>Alphaproteobacteria</taxon>
        <taxon>Hyphomicrobiales</taxon>
        <taxon>Brucellaceae</taxon>
        <taxon>Brucella/Ochrobactrum group</taxon>
        <taxon>Brucella</taxon>
    </lineage>
</organism>
<accession>B0CHX9</accession>
<reference key="1">
    <citation type="submission" date="2007-12" db="EMBL/GenBank/DDBJ databases">
        <title>Brucella suis ATCC 23445 whole genome shotgun sequencing project.</title>
        <authorList>
            <person name="Setubal J.C."/>
            <person name="Bowns C."/>
            <person name="Boyle S."/>
            <person name="Crasta O.R."/>
            <person name="Czar M.J."/>
            <person name="Dharmanolla C."/>
            <person name="Gillespie J.J."/>
            <person name="Kenyon R.W."/>
            <person name="Lu J."/>
            <person name="Mane S."/>
            <person name="Mohapatra S."/>
            <person name="Nagrani S."/>
            <person name="Purkayastha A."/>
            <person name="Rajasimha H.K."/>
            <person name="Shallom J.M."/>
            <person name="Shallom S."/>
            <person name="Shukla M."/>
            <person name="Snyder E.E."/>
            <person name="Sobral B.W."/>
            <person name="Wattam A.R."/>
            <person name="Will R."/>
            <person name="Williams K."/>
            <person name="Yoo H."/>
            <person name="Bruce D."/>
            <person name="Detter C."/>
            <person name="Munk C."/>
            <person name="Brettin T.S."/>
        </authorList>
    </citation>
    <scope>NUCLEOTIDE SEQUENCE [LARGE SCALE GENOMIC DNA]</scope>
    <source>
        <strain>ATCC 23445 / NCTC 10510</strain>
    </source>
</reference>
<name>APT_BRUSI</name>
<evidence type="ECO:0000255" key="1">
    <source>
        <dbReference type="HAMAP-Rule" id="MF_00004"/>
    </source>
</evidence>
<evidence type="ECO:0000305" key="2"/>
<keyword id="KW-0963">Cytoplasm</keyword>
<keyword id="KW-0328">Glycosyltransferase</keyword>
<keyword id="KW-0660">Purine salvage</keyword>
<keyword id="KW-0808">Transferase</keyword>
<dbReference type="EC" id="2.4.2.7" evidence="1"/>
<dbReference type="EMBL" id="CP000911">
    <property type="protein sequence ID" value="ABY38630.1"/>
    <property type="status" value="ALT_INIT"/>
    <property type="molecule type" value="Genomic_DNA"/>
</dbReference>
<dbReference type="RefSeq" id="WP_006071215.1">
    <property type="nucleotide sequence ID" value="NC_010169.1"/>
</dbReference>
<dbReference type="SMR" id="B0CHX9"/>
<dbReference type="KEGG" id="bmt:BSUIS_A1599"/>
<dbReference type="HOGENOM" id="CLU_063339_3_0_5"/>
<dbReference type="UniPathway" id="UPA00588">
    <property type="reaction ID" value="UER00646"/>
</dbReference>
<dbReference type="Proteomes" id="UP000008545">
    <property type="component" value="Chromosome I"/>
</dbReference>
<dbReference type="GO" id="GO:0005737">
    <property type="term" value="C:cytoplasm"/>
    <property type="evidence" value="ECO:0007669"/>
    <property type="project" value="UniProtKB-SubCell"/>
</dbReference>
<dbReference type="GO" id="GO:0002055">
    <property type="term" value="F:adenine binding"/>
    <property type="evidence" value="ECO:0007669"/>
    <property type="project" value="TreeGrafter"/>
</dbReference>
<dbReference type="GO" id="GO:0003999">
    <property type="term" value="F:adenine phosphoribosyltransferase activity"/>
    <property type="evidence" value="ECO:0007669"/>
    <property type="project" value="UniProtKB-UniRule"/>
</dbReference>
<dbReference type="GO" id="GO:0016208">
    <property type="term" value="F:AMP binding"/>
    <property type="evidence" value="ECO:0007669"/>
    <property type="project" value="TreeGrafter"/>
</dbReference>
<dbReference type="GO" id="GO:0006168">
    <property type="term" value="P:adenine salvage"/>
    <property type="evidence" value="ECO:0007669"/>
    <property type="project" value="InterPro"/>
</dbReference>
<dbReference type="GO" id="GO:0044209">
    <property type="term" value="P:AMP salvage"/>
    <property type="evidence" value="ECO:0007669"/>
    <property type="project" value="UniProtKB-UniRule"/>
</dbReference>
<dbReference type="GO" id="GO:0006166">
    <property type="term" value="P:purine ribonucleoside salvage"/>
    <property type="evidence" value="ECO:0007669"/>
    <property type="project" value="UniProtKB-KW"/>
</dbReference>
<dbReference type="CDD" id="cd06223">
    <property type="entry name" value="PRTases_typeI"/>
    <property type="match status" value="1"/>
</dbReference>
<dbReference type="FunFam" id="3.40.50.2020:FF:000021">
    <property type="entry name" value="Adenine phosphoribosyltransferase"/>
    <property type="match status" value="1"/>
</dbReference>
<dbReference type="Gene3D" id="3.40.50.2020">
    <property type="match status" value="1"/>
</dbReference>
<dbReference type="HAMAP" id="MF_00004">
    <property type="entry name" value="Aden_phosphoribosyltr"/>
    <property type="match status" value="1"/>
</dbReference>
<dbReference type="InterPro" id="IPR005764">
    <property type="entry name" value="Ade_phspho_trans"/>
</dbReference>
<dbReference type="InterPro" id="IPR000836">
    <property type="entry name" value="PRibTrfase_dom"/>
</dbReference>
<dbReference type="InterPro" id="IPR029057">
    <property type="entry name" value="PRTase-like"/>
</dbReference>
<dbReference type="InterPro" id="IPR050054">
    <property type="entry name" value="UPRTase/APRTase"/>
</dbReference>
<dbReference type="NCBIfam" id="TIGR01090">
    <property type="entry name" value="apt"/>
    <property type="match status" value="1"/>
</dbReference>
<dbReference type="NCBIfam" id="NF002634">
    <property type="entry name" value="PRK02304.1-3"/>
    <property type="match status" value="1"/>
</dbReference>
<dbReference type="NCBIfam" id="NF002636">
    <property type="entry name" value="PRK02304.1-5"/>
    <property type="match status" value="1"/>
</dbReference>
<dbReference type="PANTHER" id="PTHR32315">
    <property type="entry name" value="ADENINE PHOSPHORIBOSYLTRANSFERASE"/>
    <property type="match status" value="1"/>
</dbReference>
<dbReference type="PANTHER" id="PTHR32315:SF3">
    <property type="entry name" value="ADENINE PHOSPHORIBOSYLTRANSFERASE"/>
    <property type="match status" value="1"/>
</dbReference>
<dbReference type="Pfam" id="PF00156">
    <property type="entry name" value="Pribosyltran"/>
    <property type="match status" value="1"/>
</dbReference>
<dbReference type="SUPFAM" id="SSF53271">
    <property type="entry name" value="PRTase-like"/>
    <property type="match status" value="1"/>
</dbReference>
<dbReference type="PROSITE" id="PS00103">
    <property type="entry name" value="PUR_PYR_PR_TRANSFER"/>
    <property type="match status" value="1"/>
</dbReference>
<sequence length="181" mass="19586">MESGFKVTLKDAIRTIPDYPKPGVQFRDVTTLMGNAQAFRRAVDELVYPYAGNRIDKVAGIEARGFILGGAIAHQLSAGFVPIRKKGKLPRDTARIAYSLEYGVDEMEMHRDAIEKGERVVLVDDLIATGGTAEAAAKLLLQMGAEIVAACFIIDLPDLGGRKKLEALGLPVRTLVAFEGD</sequence>
<protein>
    <recommendedName>
        <fullName evidence="1">Adenine phosphoribosyltransferase</fullName>
        <shortName evidence="1">APRT</shortName>
        <ecNumber evidence="1">2.4.2.7</ecNumber>
    </recommendedName>
</protein>